<evidence type="ECO:0000250" key="1"/>
<evidence type="ECO:0000256" key="2">
    <source>
        <dbReference type="SAM" id="MobiDB-lite"/>
    </source>
</evidence>
<evidence type="ECO:0000305" key="3"/>
<comment type="function">
    <text evidence="1">Molecular chaperone that promotes the maturation, structural maintenance and proper regulation of specific target proteins involved for instance in cell cycle control and signal transduction. Undergoes a functional cycle that is linked to its ATPase activity. This cycle probably induces conformational changes in the client proteins, thereby causing their activation. Interacts dynamically with various co-chaperones that modulate its substrate recognition, ATPase cycle and chaperone function. Required for piRNA biogenesis by facilitating loading of piRNAs into PIWI proteins (By similarity).</text>
</comment>
<comment type="subunit">
    <text evidence="1">Homodimer. Interacts with shu (By similarity).</text>
</comment>
<comment type="subcellular location">
    <subcellularLocation>
        <location>Cytoplasm</location>
    </subcellularLocation>
</comment>
<comment type="similarity">
    <text evidence="3">Belongs to the heat shock protein 90 family.</text>
</comment>
<protein>
    <recommendedName>
        <fullName>Heat shock protein 83</fullName>
    </recommendedName>
    <alternativeName>
        <fullName>HSP 82</fullName>
    </alternativeName>
</protein>
<accession>O16076</accession>
<accession>O16077</accession>
<accession>O16078</accession>
<accession>O16079</accession>
<accession>O16080</accession>
<accession>O16081</accession>
<accession>O16082</accession>
<accession>O16083</accession>
<accession>O16084</accession>
<accession>O16085</accession>
<accession>O16086</accession>
<gene>
    <name type="primary">Hsp83</name>
    <name type="synonym">Hsp82</name>
</gene>
<sequence length="269" mass="30312">MPEEAETFAFQAEIAQLMSLIINTFYSNKEIFLRELISNASDALDKIRYESLTDPSKLDSGKELYIKLIPNKTAGTLTIIDTGIGMTKSDLVNNLGTIAKSGTKAFMEALQAGADISMIGQFGVGFYSAYLIADRVTVTSKNNDDEQYVWESXXXGSFTXKADNXEPLXRGTKIXLYIKEDQTDYLEESKIKEIVNKHSQFIGYPIKLLVEKEREKEVSDDEADDEKKDDEAKKDMDTDEPKIEDVGEDEDADKKDKDGKKKKTIKEKY</sequence>
<reference key="1">
    <citation type="journal article" date="1997" name="Genetics">
        <title>Gene flow and natural selection in the origin of Drosophila pseudoobscura and close relatives.</title>
        <authorList>
            <person name="Wang R.L."/>
            <person name="Wakeley J."/>
            <person name="Hey J."/>
        </authorList>
    </citation>
    <scope>NUCLEOTIDE SEQUENCE [GENOMIC DNA]</scope>
    <source>
        <strain>Persimi40</strain>
        <strain>Persimi41</strain>
        <strain>Persimi42</strain>
        <strain>Persimi43</strain>
        <strain>Persimi44</strain>
        <strain>Persimi45</strain>
        <strain>Persimi46</strain>
        <strain>Persimi47</strain>
        <strain>Persimi48</strain>
        <strain>Persimi49</strain>
        <strain>Persimi50</strain>
    </source>
</reference>
<feature type="chain" id="PRO_0000062933" description="Heat shock protein 83">
    <location>
        <begin position="1"/>
        <end position="269" status="greater than"/>
    </location>
</feature>
<feature type="region of interest" description="Disordered" evidence="2">
    <location>
        <begin position="213"/>
        <end position="269"/>
    </location>
</feature>
<feature type="compositionally biased region" description="Basic and acidic residues" evidence="2">
    <location>
        <begin position="225"/>
        <end position="245"/>
    </location>
</feature>
<feature type="compositionally biased region" description="Basic residues" evidence="2">
    <location>
        <begin position="260"/>
        <end position="269"/>
    </location>
</feature>
<feature type="binding site" evidence="1">
    <location>
        <position position="39"/>
    </location>
    <ligand>
        <name>ATP</name>
        <dbReference type="ChEBI" id="CHEBI:30616"/>
    </ligand>
</feature>
<feature type="binding site" evidence="1">
    <location>
        <position position="81"/>
    </location>
    <ligand>
        <name>ATP</name>
        <dbReference type="ChEBI" id="CHEBI:30616"/>
    </ligand>
</feature>
<feature type="binding site" evidence="1">
    <location>
        <position position="100"/>
    </location>
    <ligand>
        <name>ATP</name>
        <dbReference type="ChEBI" id="CHEBI:30616"/>
    </ligand>
</feature>
<feature type="binding site" evidence="1">
    <location>
        <position position="126"/>
    </location>
    <ligand>
        <name>ATP</name>
        <dbReference type="ChEBI" id="CHEBI:30616"/>
    </ligand>
</feature>
<feature type="non-terminal residue">
    <location>
        <position position="269"/>
    </location>
</feature>
<proteinExistence type="inferred from homology"/>
<keyword id="KW-0067">ATP-binding</keyword>
<keyword id="KW-0143">Chaperone</keyword>
<keyword id="KW-0963">Cytoplasm</keyword>
<keyword id="KW-0547">Nucleotide-binding</keyword>
<keyword id="KW-0346">Stress response</keyword>
<organism>
    <name type="scientific">Drosophila persimilis</name>
    <name type="common">Fruit fly</name>
    <dbReference type="NCBI Taxonomy" id="7234"/>
    <lineage>
        <taxon>Eukaryota</taxon>
        <taxon>Metazoa</taxon>
        <taxon>Ecdysozoa</taxon>
        <taxon>Arthropoda</taxon>
        <taxon>Hexapoda</taxon>
        <taxon>Insecta</taxon>
        <taxon>Pterygota</taxon>
        <taxon>Neoptera</taxon>
        <taxon>Endopterygota</taxon>
        <taxon>Diptera</taxon>
        <taxon>Brachycera</taxon>
        <taxon>Muscomorpha</taxon>
        <taxon>Ephydroidea</taxon>
        <taxon>Drosophilidae</taxon>
        <taxon>Drosophila</taxon>
        <taxon>Sophophora</taxon>
    </lineage>
</organism>
<name>HSP83_DROPE</name>
<dbReference type="EMBL" id="AF006549">
    <property type="protein sequence ID" value="AAC07934.1"/>
    <property type="molecule type" value="Genomic_DNA"/>
</dbReference>
<dbReference type="EMBL" id="AF006550">
    <property type="protein sequence ID" value="AAC07935.1"/>
    <property type="molecule type" value="Genomic_DNA"/>
</dbReference>
<dbReference type="EMBL" id="AF006551">
    <property type="protein sequence ID" value="AAC07936.1"/>
    <property type="molecule type" value="Genomic_DNA"/>
</dbReference>
<dbReference type="EMBL" id="AF006552">
    <property type="protein sequence ID" value="AAC07937.1"/>
    <property type="molecule type" value="Genomic_DNA"/>
</dbReference>
<dbReference type="EMBL" id="AF006553">
    <property type="protein sequence ID" value="AAC07938.1"/>
    <property type="molecule type" value="Genomic_DNA"/>
</dbReference>
<dbReference type="EMBL" id="AF006554">
    <property type="protein sequence ID" value="AAC07939.1"/>
    <property type="molecule type" value="Genomic_DNA"/>
</dbReference>
<dbReference type="EMBL" id="AF006555">
    <property type="protein sequence ID" value="AAC07940.1"/>
    <property type="molecule type" value="Genomic_DNA"/>
</dbReference>
<dbReference type="EMBL" id="AF006556">
    <property type="protein sequence ID" value="AAC07941.1"/>
    <property type="molecule type" value="Genomic_DNA"/>
</dbReference>
<dbReference type="EMBL" id="AF006557">
    <property type="protein sequence ID" value="AAC07942.1"/>
    <property type="molecule type" value="Genomic_DNA"/>
</dbReference>
<dbReference type="EMBL" id="AF006558">
    <property type="protein sequence ID" value="AAC07943.1"/>
    <property type="molecule type" value="Genomic_DNA"/>
</dbReference>
<dbReference type="EMBL" id="AF006559">
    <property type="protein sequence ID" value="AAC07944.1"/>
    <property type="molecule type" value="Genomic_DNA"/>
</dbReference>
<dbReference type="eggNOG" id="KOG0019">
    <property type="taxonomic scope" value="Eukaryota"/>
</dbReference>
<dbReference type="OrthoDB" id="5426351at2759"/>
<dbReference type="ChiTaRS" id="Hsp83">
    <property type="organism name" value="fly"/>
</dbReference>
<dbReference type="GO" id="GO:0005813">
    <property type="term" value="C:centrosome"/>
    <property type="evidence" value="ECO:0007669"/>
    <property type="project" value="EnsemblMetazoa"/>
</dbReference>
<dbReference type="GO" id="GO:0034663">
    <property type="term" value="C:endoplasmic reticulum chaperone complex"/>
    <property type="evidence" value="ECO:0007669"/>
    <property type="project" value="EnsemblMetazoa"/>
</dbReference>
<dbReference type="GO" id="GO:0048471">
    <property type="term" value="C:perinuclear region of cytoplasm"/>
    <property type="evidence" value="ECO:0007669"/>
    <property type="project" value="EnsemblMetazoa"/>
</dbReference>
<dbReference type="GO" id="GO:0005705">
    <property type="term" value="C:polytene chromosome interband"/>
    <property type="evidence" value="ECO:0007669"/>
    <property type="project" value="EnsemblMetazoa"/>
</dbReference>
<dbReference type="GO" id="GO:0101031">
    <property type="term" value="C:protein folding chaperone complex"/>
    <property type="evidence" value="ECO:0007669"/>
    <property type="project" value="EnsemblMetazoa"/>
</dbReference>
<dbReference type="GO" id="GO:0005524">
    <property type="term" value="F:ATP binding"/>
    <property type="evidence" value="ECO:0007669"/>
    <property type="project" value="UniProtKB-KW"/>
</dbReference>
<dbReference type="GO" id="GO:0016887">
    <property type="term" value="F:ATP hydrolysis activity"/>
    <property type="evidence" value="ECO:0007669"/>
    <property type="project" value="InterPro"/>
</dbReference>
<dbReference type="GO" id="GO:0140662">
    <property type="term" value="F:ATP-dependent protein folding chaperone"/>
    <property type="evidence" value="ECO:0007669"/>
    <property type="project" value="InterPro"/>
</dbReference>
<dbReference type="GO" id="GO:0005158">
    <property type="term" value="F:insulin receptor binding"/>
    <property type="evidence" value="ECO:0007669"/>
    <property type="project" value="EnsemblMetazoa"/>
</dbReference>
<dbReference type="GO" id="GO:0030911">
    <property type="term" value="F:TPR domain binding"/>
    <property type="evidence" value="ECO:0007669"/>
    <property type="project" value="EnsemblMetazoa"/>
</dbReference>
<dbReference type="GO" id="GO:0051082">
    <property type="term" value="F:unfolded protein binding"/>
    <property type="evidence" value="ECO:0007669"/>
    <property type="project" value="EnsemblMetazoa"/>
</dbReference>
<dbReference type="GO" id="GO:0007098">
    <property type="term" value="P:centrosome cycle"/>
    <property type="evidence" value="ECO:0007669"/>
    <property type="project" value="EnsemblMetazoa"/>
</dbReference>
<dbReference type="GO" id="GO:0009631">
    <property type="term" value="P:cold acclimation"/>
    <property type="evidence" value="ECO:0007669"/>
    <property type="project" value="EnsemblMetazoa"/>
</dbReference>
<dbReference type="GO" id="GO:0097753">
    <property type="term" value="P:membrane bending"/>
    <property type="evidence" value="ECO:0007669"/>
    <property type="project" value="EnsemblMetazoa"/>
</dbReference>
<dbReference type="GO" id="GO:0098866">
    <property type="term" value="P:multivesicular body fusion to apical plasma membrane"/>
    <property type="evidence" value="ECO:0007669"/>
    <property type="project" value="EnsemblMetazoa"/>
</dbReference>
<dbReference type="GO" id="GO:0008285">
    <property type="term" value="P:negative regulation of cell population proliferation"/>
    <property type="evidence" value="ECO:0007669"/>
    <property type="project" value="EnsemblMetazoa"/>
</dbReference>
<dbReference type="GO" id="GO:0019094">
    <property type="term" value="P:pole plasm mRNA localization"/>
    <property type="evidence" value="ECO:0007669"/>
    <property type="project" value="EnsemblMetazoa"/>
</dbReference>
<dbReference type="GO" id="GO:0046628">
    <property type="term" value="P:positive regulation of insulin receptor signaling pathway"/>
    <property type="evidence" value="ECO:0007669"/>
    <property type="project" value="EnsemblMetazoa"/>
</dbReference>
<dbReference type="GO" id="GO:0002052">
    <property type="term" value="P:positive regulation of neuroblast proliferation"/>
    <property type="evidence" value="ECO:0007669"/>
    <property type="project" value="EnsemblMetazoa"/>
</dbReference>
<dbReference type="GO" id="GO:0043248">
    <property type="term" value="P:proteasome assembly"/>
    <property type="evidence" value="ECO:0007669"/>
    <property type="project" value="EnsemblMetazoa"/>
</dbReference>
<dbReference type="GO" id="GO:0045187">
    <property type="term" value="P:regulation of circadian sleep/wake cycle, sleep"/>
    <property type="evidence" value="ECO:0007669"/>
    <property type="project" value="EnsemblMetazoa"/>
</dbReference>
<dbReference type="GO" id="GO:0009408">
    <property type="term" value="P:response to heat"/>
    <property type="evidence" value="ECO:0007669"/>
    <property type="project" value="EnsemblMetazoa"/>
</dbReference>
<dbReference type="GO" id="GO:0070922">
    <property type="term" value="P:RISC complex assembly"/>
    <property type="evidence" value="ECO:0007669"/>
    <property type="project" value="EnsemblMetazoa"/>
</dbReference>
<dbReference type="CDD" id="cd16927">
    <property type="entry name" value="HATPase_Hsp90-like"/>
    <property type="match status" value="1"/>
</dbReference>
<dbReference type="FunFam" id="3.30.565.10:FF:000001">
    <property type="entry name" value="Heat shock protein HSP 90-alpha"/>
    <property type="match status" value="1"/>
</dbReference>
<dbReference type="Gene3D" id="3.30.565.10">
    <property type="entry name" value="Histidine kinase-like ATPase, C-terminal domain"/>
    <property type="match status" value="1"/>
</dbReference>
<dbReference type="InterPro" id="IPR036890">
    <property type="entry name" value="HATPase_C_sf"/>
</dbReference>
<dbReference type="InterPro" id="IPR019805">
    <property type="entry name" value="Heat_shock_protein_90_CS"/>
</dbReference>
<dbReference type="InterPro" id="IPR001404">
    <property type="entry name" value="Hsp90_fam"/>
</dbReference>
<dbReference type="InterPro" id="IPR020575">
    <property type="entry name" value="Hsp90_N"/>
</dbReference>
<dbReference type="PANTHER" id="PTHR11528">
    <property type="entry name" value="HEAT SHOCK PROTEIN 90 FAMILY MEMBER"/>
    <property type="match status" value="1"/>
</dbReference>
<dbReference type="Pfam" id="PF13589">
    <property type="entry name" value="HATPase_c_3"/>
    <property type="match status" value="1"/>
</dbReference>
<dbReference type="Pfam" id="PF00183">
    <property type="entry name" value="HSP90"/>
    <property type="match status" value="1"/>
</dbReference>
<dbReference type="PRINTS" id="PR00775">
    <property type="entry name" value="HEATSHOCK90"/>
</dbReference>
<dbReference type="SMART" id="SM00387">
    <property type="entry name" value="HATPase_c"/>
    <property type="match status" value="1"/>
</dbReference>
<dbReference type="SUPFAM" id="SSF55874">
    <property type="entry name" value="ATPase domain of HSP90 chaperone/DNA topoisomerase II/histidine kinase"/>
    <property type="match status" value="1"/>
</dbReference>
<dbReference type="PROSITE" id="PS00298">
    <property type="entry name" value="HSP90"/>
    <property type="match status" value="1"/>
</dbReference>